<keyword id="KW-0012">Acyltransferase</keyword>
<keyword id="KW-0028">Amino-acid biosynthesis</keyword>
<keyword id="KW-0496">Mitochondrion</keyword>
<keyword id="KW-1185">Reference proteome</keyword>
<keyword id="KW-0808">Transferase</keyword>
<keyword id="KW-0809">Transit peptide</keyword>
<reference key="1">
    <citation type="journal article" date="2007" name="Proc. Natl. Acad. Sci. U.S.A.">
        <title>Independent sorting-out of thousands of duplicated gene pairs in two yeast species descended from a whole-genome duplication.</title>
        <authorList>
            <person name="Scannell D.R."/>
            <person name="Frank A.C."/>
            <person name="Conant G.C."/>
            <person name="Byrne K.P."/>
            <person name="Woolfit M."/>
            <person name="Wolfe K.H."/>
        </authorList>
    </citation>
    <scope>NUCLEOTIDE SEQUENCE [LARGE SCALE GENOMIC DNA]</scope>
    <source>
        <strain>ATCC 22028 / DSM 70294 / BCRC 21397 / CBS 2163 / NBRC 10782 / NRRL Y-8283 / UCD 57-17</strain>
    </source>
</reference>
<accession>A7TQL5</accession>
<comment type="function">
    <text evidence="1">N-acetylglutamate synthase involved in arginine biosynthesis.</text>
</comment>
<comment type="catalytic activity">
    <reaction>
        <text>L-glutamate + acetyl-CoA = N-acetyl-L-glutamate + CoA + H(+)</text>
        <dbReference type="Rhea" id="RHEA:24292"/>
        <dbReference type="ChEBI" id="CHEBI:15378"/>
        <dbReference type="ChEBI" id="CHEBI:29985"/>
        <dbReference type="ChEBI" id="CHEBI:44337"/>
        <dbReference type="ChEBI" id="CHEBI:57287"/>
        <dbReference type="ChEBI" id="CHEBI:57288"/>
        <dbReference type="EC" id="2.3.1.1"/>
    </reaction>
</comment>
<comment type="pathway">
    <text>Amino-acid biosynthesis; L-arginine biosynthesis; N(2)-acetyl-L-ornithine from L-glutamate: step 1/4.</text>
</comment>
<comment type="subcellular location">
    <subcellularLocation>
        <location evidence="1">Mitochondrion</location>
    </subcellularLocation>
</comment>
<comment type="similarity">
    <text evidence="4">Belongs to the acetyltransferase family.</text>
</comment>
<gene>
    <name type="primary">ARG2</name>
    <name type="ORF">Kpol_1027p10</name>
</gene>
<proteinExistence type="inferred from homology"/>
<evidence type="ECO:0000250" key="1"/>
<evidence type="ECO:0000255" key="2"/>
<evidence type="ECO:0000255" key="3">
    <source>
        <dbReference type="PROSITE-ProRule" id="PRU00532"/>
    </source>
</evidence>
<evidence type="ECO:0000305" key="4"/>
<protein>
    <recommendedName>
        <fullName>Amino-acid acetyltransferase, mitochondrial</fullName>
        <ecNumber>2.3.1.1</ecNumber>
    </recommendedName>
    <alternativeName>
        <fullName>Arginine-requiring protein 2</fullName>
    </alternativeName>
    <alternativeName>
        <fullName>Glutamate N-acetyltransferase</fullName>
    </alternativeName>
    <alternativeName>
        <fullName>N-acetylglutamate synthase</fullName>
        <shortName>AGS</shortName>
        <shortName>NAGS</shortName>
    </alternativeName>
</protein>
<organism>
    <name type="scientific">Vanderwaltozyma polyspora (strain ATCC 22028 / DSM 70294 / BCRC 21397 / CBS 2163 / NBRC 10782 / NRRL Y-8283 / UCD 57-17)</name>
    <name type="common">Kluyveromyces polysporus</name>
    <dbReference type="NCBI Taxonomy" id="436907"/>
    <lineage>
        <taxon>Eukaryota</taxon>
        <taxon>Fungi</taxon>
        <taxon>Dikarya</taxon>
        <taxon>Ascomycota</taxon>
        <taxon>Saccharomycotina</taxon>
        <taxon>Saccharomycetes</taxon>
        <taxon>Saccharomycetales</taxon>
        <taxon>Saccharomycetaceae</taxon>
        <taxon>Vanderwaltozyma</taxon>
    </lineage>
</organism>
<feature type="transit peptide" description="Mitochondrion" evidence="2">
    <location>
        <begin position="1"/>
        <end status="unknown"/>
    </location>
</feature>
<feature type="chain" id="PRO_0000372582" description="Amino-acid acetyltransferase, mitochondrial">
    <location>
        <begin status="unknown"/>
        <end position="567"/>
    </location>
</feature>
<feature type="domain" description="N-acetyltransferase" evidence="3">
    <location>
        <begin position="392"/>
        <end position="558"/>
    </location>
</feature>
<dbReference type="EC" id="2.3.1.1"/>
<dbReference type="EMBL" id="DS480460">
    <property type="protein sequence ID" value="EDO15436.1"/>
    <property type="molecule type" value="Genomic_DNA"/>
</dbReference>
<dbReference type="RefSeq" id="XP_001643294.1">
    <property type="nucleotide sequence ID" value="XM_001643244.1"/>
</dbReference>
<dbReference type="SMR" id="A7TQL5"/>
<dbReference type="FunCoup" id="A7TQL5">
    <property type="interactions" value="113"/>
</dbReference>
<dbReference type="STRING" id="436907.A7TQL5"/>
<dbReference type="GeneID" id="5543517"/>
<dbReference type="KEGG" id="vpo:Kpol_1027p10"/>
<dbReference type="eggNOG" id="KOG2436">
    <property type="taxonomic scope" value="Eukaryota"/>
</dbReference>
<dbReference type="HOGENOM" id="CLU_013088_0_0_1"/>
<dbReference type="InParanoid" id="A7TQL5"/>
<dbReference type="OMA" id="HAWYELP"/>
<dbReference type="OrthoDB" id="5585968at2759"/>
<dbReference type="PhylomeDB" id="A7TQL5"/>
<dbReference type="UniPathway" id="UPA00068">
    <property type="reaction ID" value="UER00106"/>
</dbReference>
<dbReference type="Proteomes" id="UP000000267">
    <property type="component" value="Unassembled WGS sequence"/>
</dbReference>
<dbReference type="GO" id="GO:0106098">
    <property type="term" value="C:NAGS/NAGK complex"/>
    <property type="evidence" value="ECO:0007669"/>
    <property type="project" value="EnsemblFungi"/>
</dbReference>
<dbReference type="GO" id="GO:0004042">
    <property type="term" value="F:L-glutamate N-acetyltransferase activity"/>
    <property type="evidence" value="ECO:0007669"/>
    <property type="project" value="EnsemblFungi"/>
</dbReference>
<dbReference type="GO" id="GO:0006526">
    <property type="term" value="P:L-arginine biosynthetic process"/>
    <property type="evidence" value="ECO:0007669"/>
    <property type="project" value="UniProtKB-UniPathway"/>
</dbReference>
<dbReference type="GO" id="GO:0006592">
    <property type="term" value="P:ornithine biosynthetic process"/>
    <property type="evidence" value="ECO:0007669"/>
    <property type="project" value="EnsemblFungi"/>
</dbReference>
<dbReference type="Gene3D" id="3.40.630.30">
    <property type="match status" value="1"/>
</dbReference>
<dbReference type="InterPro" id="IPR011190">
    <property type="entry name" value="GlcNAc_Synth_fun"/>
</dbReference>
<dbReference type="InterPro" id="IPR006855">
    <property type="entry name" value="Vertebrate-like_GNAT_dom"/>
</dbReference>
<dbReference type="PANTHER" id="PTHR23342:SF4">
    <property type="entry name" value="AMINO-ACID ACETYLTRANSFERASE, MITOCHONDRIAL"/>
    <property type="match status" value="1"/>
</dbReference>
<dbReference type="PANTHER" id="PTHR23342">
    <property type="entry name" value="N-ACETYLGLUTAMATE SYNTHASE"/>
    <property type="match status" value="1"/>
</dbReference>
<dbReference type="Pfam" id="PF04768">
    <property type="entry name" value="NAT"/>
    <property type="match status" value="1"/>
</dbReference>
<dbReference type="PIRSF" id="PIRSF007892">
    <property type="entry name" value="NAGS_fungal"/>
    <property type="match status" value="1"/>
</dbReference>
<dbReference type="PROSITE" id="PS51731">
    <property type="entry name" value="GNAT_NAGS"/>
    <property type="match status" value="1"/>
</dbReference>
<sequence>MWKHLLSGGLKVEQQNASAKKLILSVLNSTATKREARDYLTKYTRSDDSKQLNHCLLLIRHLNSLRQHEISELTSTVKKLGMLGLRPIFVIPPSRHIAKQAEILDIITTLAGFRPLQLQNSLSQSIDGTYTSILSSQNAILNNHELEVVPILKPYVYREKDASEFLTNDFTKFMQNLCKGNNTHIDKFFILNRIGGIPSNERNENSHVFVNLSQEYDCLKKDLKGQVDLLIERRPRTESLLHKLELHLNEDAINTLENQFKEHLQDLEMMNVVLSNLSSSATGLITTIESAASSSEKKNPLIYNILTDRSLISSSLPRFKKIRHTPPSGSRPAKKFHRMTYLEDYQQLDKSSPPDSALVTTVFKKGIDIKIFDYPKLTQFNSLSLPVEFRVKDSPQTNPLHKIDLSKLKGLIDRSFKRSLNLNHYLHRINGNIASIIVIGDYDGIAILTNEGPNDNPFVYLDKFAISPEMKGSLCISDIIFNLMVKKFPKELLWRSRNDNVVNKWYFQRSVGVLDLSIDLGDGNQTKSNFNLFYYGEPKSTNYGFHNLARLKEYAKHIRDIHPSWDK</sequence>
<name>NAGS_VANPO</name>